<reference key="1">
    <citation type="journal article" date="1993" name="Immunogenetics">
        <title>Molecular cloning of equine CD44 cDNA by a COS cell expression system.</title>
        <authorList>
            <person name="Tavernor A.S."/>
            <person name="Deverson E.V."/>
            <person name="Coadwell W.J."/>
            <person name="Lunn D.P."/>
            <person name="Zhang C."/>
            <person name="Davis W."/>
            <person name="Butcher G.W."/>
        </authorList>
    </citation>
    <scope>NUCLEOTIDE SEQUENCE [MRNA]</scope>
</reference>
<proteinExistence type="evidence at transcript level"/>
<evidence type="ECO:0000250" key="1"/>
<evidence type="ECO:0000250" key="2">
    <source>
        <dbReference type="UniProtKB" id="P15379"/>
    </source>
</evidence>
<evidence type="ECO:0000250" key="3">
    <source>
        <dbReference type="UniProtKB" id="P16070"/>
    </source>
</evidence>
<evidence type="ECO:0000255" key="4"/>
<evidence type="ECO:0000255" key="5">
    <source>
        <dbReference type="PROSITE-ProRule" id="PRU00323"/>
    </source>
</evidence>
<evidence type="ECO:0000256" key="6">
    <source>
        <dbReference type="SAM" id="MobiDB-lite"/>
    </source>
</evidence>
<comment type="function">
    <text evidence="2 3">Cell-surface receptor that plays a role in cell-cell interactions, as well as cell adhesion and migration, helping them to sense and respond to changes in the tissue microenvironment. Participates thereby in a wide variety of cellular functions including the activation, recirculation and homing of T-lymphocytes, hematopoiesis, inflammation and response to bacterial infection. Engages, through its ectodomain, extracellular matrix components such as hyaluronan/HA, collagen, growth factors, cytokines or proteases and serves as a platform for signal transduction by assembling, via its cytoplasmic domain, protein complexes containing receptor kinases and membrane proteases. Such effectors include PKN2, the RhoGTPases RAC1 and RHOA, Rho-kinases and phospholipase C that coordinate signaling pathways promoting calcium mobilization and actin-mediated cytoskeleton reorganization essential for cell migration and adhesion.</text>
</comment>
<comment type="subunit">
    <text evidence="2 3">Interacts with PKN2 (By similarity). Interacts with TIAM1 and TIAM2 (By similarity). Interacts with HA, as well as other glycosaminoglycans, collagen, laminin, and fibronectin via its N-terminal segment. Interacts with UNC119. Interacts with PDPN (via extracellular domain); this interaction is required for PDPN-mediated directional migration and regulation of lamellipodia extension/stabilization during cell spreading and migration (By similarity). Interacts with RDX, EZR and MSN (By similarity). Interacts with EGFR (By similarity). Interacts with CD74; this complex is essential for the MIF-induced signaling cascade that results in B cell survival (By similarity).</text>
</comment>
<comment type="subcellular location">
    <subcellularLocation>
        <location evidence="2">Cell membrane</location>
        <topology evidence="2">Single-pass type I membrane protein</topology>
    </subcellularLocation>
    <subcellularLocation>
        <location evidence="2">Cell projection</location>
        <location evidence="2">Microvillus</location>
    </subcellularLocation>
    <subcellularLocation>
        <location evidence="3">Secreted</location>
    </subcellularLocation>
    <text evidence="2">Colocalizes with actin in membrane protrusions at wounding edges. Co-localizes with RDX, EZR and MSN in microvilli.</text>
</comment>
<comment type="domain">
    <text evidence="1">The lectin-like LINK domain is responsible for hyaluronan binding.</text>
</comment>
<comment type="PTM">
    <text evidence="3">Phosphorylated; activation of PKC results in the dephosphorylation of Ser-323 (constitutive phosphorylation site), and the phosphorylation of Ser-289.</text>
</comment>
<comment type="PTM">
    <text evidence="3">N-glycosylated.</text>
</comment>
<comment type="PTM">
    <text evidence="3">O-glycosylated; contains chondroitin sulfate glycans which can be more or less sulfated.</text>
</comment>
<gene>
    <name type="primary">CD44</name>
</gene>
<name>CD44_HORSE</name>
<organism>
    <name type="scientific">Equus caballus</name>
    <name type="common">Horse</name>
    <dbReference type="NCBI Taxonomy" id="9796"/>
    <lineage>
        <taxon>Eukaryota</taxon>
        <taxon>Metazoa</taxon>
        <taxon>Chordata</taxon>
        <taxon>Craniata</taxon>
        <taxon>Vertebrata</taxon>
        <taxon>Euteleostomi</taxon>
        <taxon>Mammalia</taxon>
        <taxon>Eutheria</taxon>
        <taxon>Laurasiatheria</taxon>
        <taxon>Perissodactyla</taxon>
        <taxon>Equidae</taxon>
        <taxon>Equus</taxon>
    </lineage>
</organism>
<protein>
    <recommendedName>
        <fullName>CD44 antigen</fullName>
    </recommendedName>
    <alternativeName>
        <fullName>Extracellular matrix receptor III</fullName>
        <shortName>ECMR-III</shortName>
    </alternativeName>
    <alternativeName>
        <fullName>GP90 lymphocyte homing/adhesion receptor</fullName>
    </alternativeName>
    <alternativeName>
        <fullName>HUTCH-I</fullName>
    </alternativeName>
    <alternativeName>
        <fullName>Hermes antigen</fullName>
    </alternativeName>
    <alternativeName>
        <fullName>Hyaluronate receptor</fullName>
    </alternativeName>
    <alternativeName>
        <fullName>Phagocytic glycoprotein 1</fullName>
        <shortName>PGP-1</shortName>
    </alternativeName>
    <alternativeName>
        <fullName>Phagocytic glycoprotein I</fullName>
        <shortName>PGP-I</shortName>
    </alternativeName>
    <cdAntigenName>CD44</cdAntigenName>
</protein>
<keyword id="KW-0130">Cell adhesion</keyword>
<keyword id="KW-1003">Cell membrane</keyword>
<keyword id="KW-0966">Cell projection</keyword>
<keyword id="KW-1015">Disulfide bond</keyword>
<keyword id="KW-0325">Glycoprotein</keyword>
<keyword id="KW-0472">Membrane</keyword>
<keyword id="KW-0597">Phosphoprotein</keyword>
<keyword id="KW-0654">Proteoglycan</keyword>
<keyword id="KW-0675">Receptor</keyword>
<keyword id="KW-1185">Reference proteome</keyword>
<keyword id="KW-0964">Secreted</keyword>
<keyword id="KW-0732">Signal</keyword>
<keyword id="KW-0812">Transmembrane</keyword>
<keyword id="KW-1133">Transmembrane helix</keyword>
<dbReference type="EMBL" id="X66862">
    <property type="protein sequence ID" value="CAA47331.1"/>
    <property type="molecule type" value="mRNA"/>
</dbReference>
<dbReference type="PIR" id="I46245">
    <property type="entry name" value="S24240"/>
</dbReference>
<dbReference type="SMR" id="Q05078"/>
<dbReference type="GlyCosmos" id="Q05078">
    <property type="glycosylation" value="5 sites, No reported glycans"/>
</dbReference>
<dbReference type="PeptideAtlas" id="Q05078"/>
<dbReference type="InParanoid" id="Q05078"/>
<dbReference type="Proteomes" id="UP000002281">
    <property type="component" value="Unplaced"/>
</dbReference>
<dbReference type="GO" id="GO:0016324">
    <property type="term" value="C:apical plasma membrane"/>
    <property type="evidence" value="ECO:0000250"/>
    <property type="project" value="UniProtKB"/>
</dbReference>
<dbReference type="GO" id="GO:0016323">
    <property type="term" value="C:basolateral plasma membrane"/>
    <property type="evidence" value="ECO:0000318"/>
    <property type="project" value="GO_Central"/>
</dbReference>
<dbReference type="GO" id="GO:0042995">
    <property type="term" value="C:cell projection"/>
    <property type="evidence" value="ECO:0000250"/>
    <property type="project" value="UniProtKB"/>
</dbReference>
<dbReference type="GO" id="GO:0005576">
    <property type="term" value="C:extracellular region"/>
    <property type="evidence" value="ECO:0007669"/>
    <property type="project" value="UniProtKB-SubCell"/>
</dbReference>
<dbReference type="GO" id="GO:0031258">
    <property type="term" value="C:lamellipodium membrane"/>
    <property type="evidence" value="ECO:0000250"/>
    <property type="project" value="UniProtKB"/>
</dbReference>
<dbReference type="GO" id="GO:0035692">
    <property type="term" value="C:macrophage migration inhibitory factor receptor complex"/>
    <property type="evidence" value="ECO:0000318"/>
    <property type="project" value="GO_Central"/>
</dbReference>
<dbReference type="GO" id="GO:0005902">
    <property type="term" value="C:microvillus"/>
    <property type="evidence" value="ECO:0000250"/>
    <property type="project" value="UniProtKB"/>
</dbReference>
<dbReference type="GO" id="GO:0005886">
    <property type="term" value="C:plasma membrane"/>
    <property type="evidence" value="ECO:0000250"/>
    <property type="project" value="UniProtKB"/>
</dbReference>
<dbReference type="GO" id="GO:0005540">
    <property type="term" value="F:hyaluronic acid binding"/>
    <property type="evidence" value="ECO:0000318"/>
    <property type="project" value="GO_Central"/>
</dbReference>
<dbReference type="GO" id="GO:0004888">
    <property type="term" value="F:transmembrane signaling receptor activity"/>
    <property type="evidence" value="ECO:0000318"/>
    <property type="project" value="GO_Central"/>
</dbReference>
<dbReference type="GO" id="GO:0007155">
    <property type="term" value="P:cell adhesion"/>
    <property type="evidence" value="ECO:0000318"/>
    <property type="project" value="GO_Central"/>
</dbReference>
<dbReference type="GO" id="GO:0019221">
    <property type="term" value="P:cytokine-mediated signaling pathway"/>
    <property type="evidence" value="ECO:0007669"/>
    <property type="project" value="GOC"/>
</dbReference>
<dbReference type="GO" id="GO:0006954">
    <property type="term" value="P:inflammatory response"/>
    <property type="evidence" value="ECO:0000318"/>
    <property type="project" value="GO_Central"/>
</dbReference>
<dbReference type="GO" id="GO:0070374">
    <property type="term" value="P:positive regulation of ERK1 and ERK2 cascade"/>
    <property type="evidence" value="ECO:0000318"/>
    <property type="project" value="GO_Central"/>
</dbReference>
<dbReference type="GO" id="GO:2000392">
    <property type="term" value="P:regulation of lamellipodium morphogenesis"/>
    <property type="evidence" value="ECO:0000250"/>
    <property type="project" value="UniProtKB"/>
</dbReference>
<dbReference type="GO" id="GO:0044319">
    <property type="term" value="P:wound healing, spreading of cells"/>
    <property type="evidence" value="ECO:0000250"/>
    <property type="project" value="UniProtKB"/>
</dbReference>
<dbReference type="CDD" id="cd03516">
    <property type="entry name" value="Link_domain_CD44_like"/>
    <property type="match status" value="1"/>
</dbReference>
<dbReference type="FunFam" id="3.10.100.10:FF:000004">
    <property type="entry name" value="CD44 antigen isoform X2"/>
    <property type="match status" value="1"/>
</dbReference>
<dbReference type="Gene3D" id="3.10.100.10">
    <property type="entry name" value="Mannose-Binding Protein A, subunit A"/>
    <property type="match status" value="1"/>
</dbReference>
<dbReference type="InterPro" id="IPR016186">
    <property type="entry name" value="C-type_lectin-like/link_sf"/>
</dbReference>
<dbReference type="InterPro" id="IPR001231">
    <property type="entry name" value="CD44_antigen"/>
</dbReference>
<dbReference type="InterPro" id="IPR043210">
    <property type="entry name" value="CD44_antigen-like"/>
</dbReference>
<dbReference type="InterPro" id="IPR016187">
    <property type="entry name" value="CTDL_fold"/>
</dbReference>
<dbReference type="InterPro" id="IPR000538">
    <property type="entry name" value="Link_dom"/>
</dbReference>
<dbReference type="PANTHER" id="PTHR10225:SF6">
    <property type="entry name" value="CD44 ANTIGEN"/>
    <property type="match status" value="1"/>
</dbReference>
<dbReference type="PANTHER" id="PTHR10225">
    <property type="entry name" value="HYALURONAN RECEPTOR"/>
    <property type="match status" value="1"/>
</dbReference>
<dbReference type="Pfam" id="PF00193">
    <property type="entry name" value="Xlink"/>
    <property type="match status" value="1"/>
</dbReference>
<dbReference type="PRINTS" id="PR00658">
    <property type="entry name" value="CD44"/>
</dbReference>
<dbReference type="PRINTS" id="PR01265">
    <property type="entry name" value="LINKMODULE"/>
</dbReference>
<dbReference type="SMART" id="SM00445">
    <property type="entry name" value="LINK"/>
    <property type="match status" value="1"/>
</dbReference>
<dbReference type="SUPFAM" id="SSF56436">
    <property type="entry name" value="C-type lectin-like"/>
    <property type="match status" value="1"/>
</dbReference>
<dbReference type="PROSITE" id="PS01241">
    <property type="entry name" value="LINK_1"/>
    <property type="match status" value="1"/>
</dbReference>
<dbReference type="PROSITE" id="PS50963">
    <property type="entry name" value="LINK_2"/>
    <property type="match status" value="1"/>
</dbReference>
<accession>Q05078</accession>
<sequence length="359" mass="38990">MDKFWWRAAWGLCLVPLSLAQIDLNITCRYAGVFHVEKNGRYSISRTEAADLCKAFNSTLPTMAQMQKALNIGFETCRIGFIEGHVVIPPIHPNSICAANNTGVYILTSNTSQYDTYCFNASAPPEEDCTSVTDLPNAFEGPITITIVNRDGTRYTKKGEYRTNPEDINPSTPADDDVSSGSSSERSTSGGYSIFHTHLPTTRPTQDQSSPWVSDSPEKTPTTKDRASGGRAQTTHGSETSGHSTGSQEGGASTTSGPIRRPQIPEWLIILASLLALALILAVCIAVNSRRRCGQKKKLVINNGNGAVDDRKASGLNGEASRSQEMVHLVNKESSETQDQFMTADETRNLQNVDMKIGV</sequence>
<feature type="signal peptide" evidence="1">
    <location>
        <begin position="1"/>
        <end position="20"/>
    </location>
</feature>
<feature type="chain" id="PRO_0000026686" description="CD44 antigen">
    <location>
        <begin position="21"/>
        <end position="359"/>
    </location>
</feature>
<feature type="topological domain" description="Extracellular" evidence="4">
    <location>
        <begin position="21"/>
        <end position="266"/>
    </location>
</feature>
<feature type="transmembrane region" description="Helical" evidence="4">
    <location>
        <begin position="267"/>
        <end position="287"/>
    </location>
</feature>
<feature type="topological domain" description="Cytoplasmic" evidence="4">
    <location>
        <begin position="288"/>
        <end position="359"/>
    </location>
</feature>
<feature type="domain" description="Link" evidence="5">
    <location>
        <begin position="32"/>
        <end position="120"/>
    </location>
</feature>
<feature type="region of interest" description="Disordered" evidence="6">
    <location>
        <begin position="156"/>
        <end position="259"/>
    </location>
</feature>
<feature type="region of interest" description="Stem">
    <location>
        <begin position="225"/>
        <end position="266"/>
    </location>
</feature>
<feature type="region of interest" description="Required for interaction with EZR, MSN and RDX and for co-localization to microvilli" evidence="2">
    <location>
        <begin position="290"/>
        <end position="308"/>
    </location>
</feature>
<feature type="compositionally biased region" description="Basic and acidic residues" evidence="6">
    <location>
        <begin position="156"/>
        <end position="165"/>
    </location>
</feature>
<feature type="compositionally biased region" description="Low complexity" evidence="6">
    <location>
        <begin position="179"/>
        <end position="193"/>
    </location>
</feature>
<feature type="compositionally biased region" description="Polar residues" evidence="6">
    <location>
        <begin position="199"/>
        <end position="213"/>
    </location>
</feature>
<feature type="compositionally biased region" description="Basic and acidic residues" evidence="6">
    <location>
        <begin position="216"/>
        <end position="228"/>
    </location>
</feature>
<feature type="compositionally biased region" description="Low complexity" evidence="6">
    <location>
        <begin position="233"/>
        <end position="251"/>
    </location>
</feature>
<feature type="binding site" evidence="1">
    <location>
        <position position="41"/>
    </location>
    <ligand>
        <name>hyaluronan</name>
        <dbReference type="ChEBI" id="CHEBI:132153"/>
    </ligand>
</feature>
<feature type="binding site" evidence="1">
    <location>
        <position position="78"/>
    </location>
    <ligand>
        <name>hyaluronan</name>
        <dbReference type="ChEBI" id="CHEBI:132153"/>
    </ligand>
</feature>
<feature type="binding site" evidence="1">
    <location>
        <position position="105"/>
    </location>
    <ligand>
        <name>hyaluronan</name>
        <dbReference type="ChEBI" id="CHEBI:132153"/>
    </ligand>
</feature>
<feature type="modified residue" description="Phosphoserine; by PKC" evidence="3">
    <location>
        <position position="289"/>
    </location>
</feature>
<feature type="modified residue" description="Phosphoserine" evidence="2">
    <location>
        <position position="314"/>
    </location>
</feature>
<feature type="modified residue" description="Phosphoserine" evidence="3">
    <location>
        <position position="323"/>
    </location>
</feature>
<feature type="glycosylation site" description="N-linked (GlcNAc...) asparagine" evidence="4">
    <location>
        <position position="25"/>
    </location>
</feature>
<feature type="glycosylation site" description="N-linked (GlcNAc...) asparagine" evidence="4">
    <location>
        <position position="57"/>
    </location>
</feature>
<feature type="glycosylation site" description="N-linked (GlcNAc...) asparagine" evidence="4">
    <location>
        <position position="100"/>
    </location>
</feature>
<feature type="glycosylation site" description="N-linked (GlcNAc...) asparagine" evidence="4">
    <location>
        <position position="110"/>
    </location>
</feature>
<feature type="glycosylation site" description="N-linked (GlcNAc...) asparagine" evidence="4">
    <location>
        <position position="120"/>
    </location>
</feature>
<feature type="glycosylation site" description="O-linked (Xyl...) (chondroitin sulfate) serine" evidence="3">
    <location>
        <position position="180"/>
    </location>
</feature>
<feature type="disulfide bond" evidence="5">
    <location>
        <begin position="28"/>
        <end position="129"/>
    </location>
</feature>
<feature type="disulfide bond" evidence="5">
    <location>
        <begin position="53"/>
        <end position="118"/>
    </location>
</feature>
<feature type="disulfide bond" evidence="5">
    <location>
        <begin position="77"/>
        <end position="97"/>
    </location>
</feature>